<protein>
    <recommendedName>
        <fullName>Lipoprotein lipase</fullName>
        <shortName>LPL</shortName>
        <ecNumber evidence="3">3.1.1.34</ecNumber>
    </recommendedName>
    <alternativeName>
        <fullName>Phospholipase A1</fullName>
        <ecNumber evidence="2">3.1.1.32</ecNumber>
    </alternativeName>
</protein>
<keyword id="KW-0106">Calcium</keyword>
<keyword id="KW-1003">Cell membrane</keyword>
<keyword id="KW-0162">Chylomicron</keyword>
<keyword id="KW-1015">Disulfide bond</keyword>
<keyword id="KW-0272">Extracellular matrix</keyword>
<keyword id="KW-0325">Glycoprotein</keyword>
<keyword id="KW-0358">Heparin-binding</keyword>
<keyword id="KW-0378">Hydrolase</keyword>
<keyword id="KW-0442">Lipid degradation</keyword>
<keyword id="KW-0443">Lipid metabolism</keyword>
<keyword id="KW-0472">Membrane</keyword>
<keyword id="KW-0479">Metal-binding</keyword>
<keyword id="KW-0944">Nitration</keyword>
<keyword id="KW-1185">Reference proteome</keyword>
<keyword id="KW-0964">Secreted</keyword>
<keyword id="KW-0732">Signal</keyword>
<keyword id="KW-0850">VLDL</keyword>
<gene>
    <name type="primary">LPL</name>
</gene>
<reference key="1">
    <citation type="journal article" date="1989" name="Biochim. Biophys. Acta">
        <title>Avian adipose lipoprotein lipase: cDNA sequence and reciprocal regulation of mRNA levels in adipose and heart.</title>
        <authorList>
            <person name="Cooper D.A."/>
            <person name="Stein J.C."/>
            <person name="Strieleman P.J."/>
            <person name="Bensadoun A."/>
        </authorList>
    </citation>
    <scope>NUCLEOTIDE SEQUENCE [MRNA]</scope>
    <source>
        <strain>White leghorn</strain>
        <tissue>Adipose tissue</tissue>
    </source>
</reference>
<reference key="2">
    <citation type="journal article" date="1992" name="Biochim. Biophys. Acta">
        <title>The structure and complete nucleotide sequence of the avian lipoprotein lipase gene.</title>
        <authorList>
            <person name="Cooper D.A."/>
            <person name="Lu S.C."/>
            <person name="Viswanath R."/>
            <person name="Freiman R.N."/>
            <person name="Bensadoun A."/>
        </authorList>
    </citation>
    <scope>NUCLEOTIDE SEQUENCE [GENOMIC DNA]</scope>
    <source>
        <strain>White leghorn</strain>
    </source>
</reference>
<reference key="3">
    <citation type="journal article" date="1991" name="J. Biol. Chem.">
        <title>Occurrence of sulfate in an asparagine-linked complex oligosaccharide of chicken adipose lipoprotein lipase.</title>
        <authorList>
            <person name="Hoogewerf A.J."/>
            <person name="Bensadoun A."/>
        </authorList>
    </citation>
    <scope>GLYCOSYLATION AT ASN-70; ASN-354 AND ASN-386</scope>
    <scope>STRUCTURE OF CARBOHYDRATES</scope>
</reference>
<reference key="4">
    <citation type="journal article" date="1998" name="J. Lipid Res.">
        <title>Identification of a heparin-binding domain in the distal carboxyl-terminal region of lipoprotein lipase by site-directed mutagenesis.</title>
        <authorList>
            <person name="Sendak R.A."/>
            <person name="Bensadoun A."/>
        </authorList>
    </citation>
    <scope>HEPARIN-BINDING DOMAIN</scope>
    <scope>MUTAGENESIS OF ARG-306; LYS-307; ARG-309; LYS-346; ARG-430; ARG-432; LYS-434; LYS-440 AND LYS-441</scope>
</reference>
<name>LIPL_CHICK</name>
<feature type="signal peptide">
    <location>
        <begin position="1"/>
        <end position="25"/>
    </location>
</feature>
<feature type="chain" id="PRO_0000017782" description="Lipoprotein lipase" evidence="9">
    <location>
        <begin position="26"/>
        <end position="490"/>
    </location>
</feature>
<feature type="domain" description="PLAT" evidence="5">
    <location>
        <begin position="341"/>
        <end position="464"/>
    </location>
</feature>
<feature type="region of interest" description="Interaction with GPIHBP1" evidence="2">
    <location>
        <begin position="32"/>
        <end position="53"/>
    </location>
</feature>
<feature type="region of interest" description="Essential for determining substrate specificity" evidence="2">
    <location>
        <begin position="243"/>
        <end position="266"/>
    </location>
</feature>
<feature type="region of interest" description="Important for interaction with lipoprotein particles" evidence="2">
    <location>
        <begin position="417"/>
        <end position="421"/>
    </location>
</feature>
<feature type="region of interest" description="Important for heparin binding" evidence="2">
    <location>
        <begin position="430"/>
        <end position="434"/>
    </location>
</feature>
<feature type="region of interest" description="Interaction with GPIHBP1" evidence="2">
    <location>
        <begin position="443"/>
        <end position="467"/>
    </location>
</feature>
<feature type="region of interest" description="Disordered" evidence="7">
    <location>
        <begin position="471"/>
        <end position="490"/>
    </location>
</feature>
<feature type="compositionally biased region" description="Basic and acidic residues" evidence="7">
    <location>
        <begin position="480"/>
        <end position="490"/>
    </location>
</feature>
<feature type="active site" description="Nucleophile" evidence="2">
    <location>
        <position position="159"/>
    </location>
</feature>
<feature type="active site" description="Charge relay system" evidence="6">
    <location>
        <position position="183"/>
    </location>
</feature>
<feature type="active site" description="Charge relay system" evidence="6">
    <location>
        <position position="268"/>
    </location>
</feature>
<feature type="binding site" evidence="2">
    <location>
        <position position="194"/>
    </location>
    <ligand>
        <name>Ca(2+)</name>
        <dbReference type="ChEBI" id="CHEBI:29108"/>
    </ligand>
</feature>
<feature type="binding site" evidence="2">
    <location>
        <position position="197"/>
    </location>
    <ligand>
        <name>Ca(2+)</name>
        <dbReference type="ChEBI" id="CHEBI:29108"/>
    </ligand>
</feature>
<feature type="binding site" evidence="2">
    <location>
        <position position="199"/>
    </location>
    <ligand>
        <name>Ca(2+)</name>
        <dbReference type="ChEBI" id="CHEBI:29108"/>
    </ligand>
</feature>
<feature type="binding site" evidence="2">
    <location>
        <position position="202"/>
    </location>
    <ligand>
        <name>Ca(2+)</name>
        <dbReference type="ChEBI" id="CHEBI:29108"/>
    </ligand>
</feature>
<feature type="binding site" evidence="10">
    <location>
        <begin position="430"/>
        <end position="441"/>
    </location>
    <ligand>
        <name>heparin</name>
        <dbReference type="ChEBI" id="CHEBI:28304"/>
    </ligand>
</feature>
<feature type="modified residue" description="3'-nitrotyrosine" evidence="1">
    <location>
        <position position="121"/>
    </location>
</feature>
<feature type="modified residue" description="3'-nitrotyrosine" evidence="1">
    <location>
        <position position="191"/>
    </location>
</feature>
<feature type="modified residue" description="3'-nitrotyrosine" evidence="1">
    <location>
        <position position="343"/>
    </location>
</feature>
<feature type="glycosylation site" description="N-linked (GlcNAc...) (complex) asparagine" evidence="8">
    <location>
        <position position="70"/>
    </location>
</feature>
<feature type="glycosylation site" description="N-linked (GlcNAc...) asparagine" evidence="8">
    <location>
        <position position="354"/>
    </location>
</feature>
<feature type="glycosylation site" description="N-linked (GlcNAc...) asparagine" evidence="8">
    <location>
        <position position="386"/>
    </location>
</feature>
<feature type="disulfide bond" evidence="5">
    <location>
        <begin position="54"/>
        <end position="67"/>
    </location>
</feature>
<feature type="disulfide bond" evidence="5">
    <location>
        <begin position="243"/>
        <end position="266"/>
    </location>
</feature>
<feature type="disulfide bond" evidence="5">
    <location>
        <begin position="291"/>
        <end position="310"/>
    </location>
</feature>
<feature type="disulfide bond" evidence="5">
    <location>
        <begin position="302"/>
        <end position="305"/>
    </location>
</feature>
<feature type="disulfide bond" evidence="5">
    <location>
        <begin position="445"/>
        <end position="465"/>
    </location>
</feature>
<feature type="mutagenesis site" description="Some loss of heparin-binding ability; when associated with Q-307 and Q-309." evidence="10">
    <original>R</original>
    <variation>Q</variation>
    <location>
        <position position="306"/>
    </location>
</feature>
<feature type="mutagenesis site" description="Some loss of heparin-binding ability; when associated with Q-306 and Q-309." evidence="10">
    <original>K</original>
    <variation>Q</variation>
    <location>
        <position position="307"/>
    </location>
</feature>
<feature type="mutagenesis site" description="Some loss of heparin-binding ability; when associated with Q-306 and Q-307." evidence="10">
    <original>R</original>
    <variation>Q</variation>
    <location>
        <position position="309"/>
    </location>
</feature>
<feature type="mutagenesis site" description="Reduced heparin-binding ability and some decrease in specific enzymatic activity." evidence="10">
    <original>K</original>
    <variation>N</variation>
    <location>
        <position position="346"/>
    </location>
</feature>
<feature type="mutagenesis site" description="Reduced heparin-binding ability and some reduction in specific enzymatic activity. Almost complete loss of heparin binding and greatly reduced specific enzymatic activity; when associated with N-432 and N-434." evidence="10">
    <original>R</original>
    <variation>N</variation>
    <location>
        <position position="430"/>
    </location>
</feature>
<feature type="mutagenesis site" description="Reduced heparin-binding ability. Almost complete loss of heparin binding and greatly reduced specific enzymatic activity; when associated with N-430 and N-434." evidence="10">
    <original>R</original>
    <variation>N</variation>
    <location>
        <position position="432"/>
    </location>
</feature>
<feature type="mutagenesis site" description="Reduced heparin-binding ability. Almost complete loss of heparin binding and greatly reduced specific enzymatic activity; when associated with N-430 and N-432." evidence="10">
    <original>K</original>
    <variation>N</variation>
    <location>
        <position position="434"/>
    </location>
</feature>
<feature type="mutagenesis site" description="No change in heparin-binding activity nor in specific enzymatic activity. Reduced heparin-binding activity and decreased specific enzymatic activity; when associated with N-441." evidence="10">
    <original>K</original>
    <variation>N</variation>
    <location>
        <position position="440"/>
    </location>
</feature>
<feature type="mutagenesis site" description="Reduced heparin-binding activity and decreased specific enzymatic activity. No further reduction of heparin-binding nor of specific enzymatic activity; when associated with N-440." evidence="10">
    <original>K</original>
    <variation>N</variation>
    <location>
        <position position="441"/>
    </location>
</feature>
<feature type="sequence conflict" description="In Ref. 2; CAA43037." evidence="11" ref="2">
    <original>P</original>
    <variation>A</variation>
    <location>
        <position position="377"/>
    </location>
</feature>
<accession>P11602</accession>
<sequence>MERGRGMGKTALLAVLCLCLRGAAGSDPEAEMNFEGIESKFSLRTPAEPDEDVCYLVPGQMDSLAQCNFNHTSKTFVVIHGWTVTGMYESWVPKLVDALYKREPDSNVIVVDWLVRAQQHYPVSAAYTKLVGKDVAMFIDWMEEKFNYPLNNVHLLGYSLGAHAAGIAGSLTKKKVNRITGLDPAGPTFEYADAPIRLSPDDADFVDVLHTYTRGSPDRSIGIQKPVGHIDIYPNGGGFQPGCNLGEALRLIAEKGFSDVDQLVKCSHERSIHLFIDSLLYEEKPSMAYRCNTKEAFEKGLCLSCRKNRCNNLGYKVNRVRTKRNTKMYLKTRAQMPYKVFHYQVKIHFFGKTNVTKVDQPFLISLYGTLDESENIPFTLPEVSSNKTFSFLIYTEVDIGDLLMLKLQWEKDTFFSWSDWWTPFAFTIQRVRVKSGETQKKVVFCSRDGSSRLGKGEEAAIFVKCLEQPVSRKRGGAKKASKENSAHESA</sequence>
<comment type="function">
    <text evidence="2">Key enzyme in triglyceride metabolism (By similarity). Catalyzes the hydrolysis of triglycerides from circulating chylomicrons and very low density lipoproteins (VLDL), and thereby plays an important role in lipid clearance from the blood stream, lipid utilization and storage (By similarity). Although it has both phospholipase and triglyceride lipase activities it is primarily a triglyceride lipase with low but detectable phospholipase activity (By similarity). Mediates margination of triglyceride-rich lipoprotein particles in capillaries (By similarity). Recruited to its site of action on the luminal surface of vascular endothelium by binding to GPIHBP1 and cell surface heparan sulfate proteoglycans (By similarity).</text>
</comment>
<comment type="catalytic activity">
    <reaction evidence="3">
        <text>a triacylglycerol + H2O = a diacylglycerol + a fatty acid + H(+)</text>
        <dbReference type="Rhea" id="RHEA:12044"/>
        <dbReference type="ChEBI" id="CHEBI:15377"/>
        <dbReference type="ChEBI" id="CHEBI:15378"/>
        <dbReference type="ChEBI" id="CHEBI:17855"/>
        <dbReference type="ChEBI" id="CHEBI:18035"/>
        <dbReference type="ChEBI" id="CHEBI:28868"/>
        <dbReference type="EC" id="3.1.1.34"/>
    </reaction>
</comment>
<comment type="catalytic activity">
    <reaction evidence="2">
        <text>a 1,2-diacyl-sn-glycero-3-phosphocholine + H2O = a 2-acyl-sn-glycero-3-phosphocholine + a fatty acid + H(+)</text>
        <dbReference type="Rhea" id="RHEA:18689"/>
        <dbReference type="ChEBI" id="CHEBI:15377"/>
        <dbReference type="ChEBI" id="CHEBI:15378"/>
        <dbReference type="ChEBI" id="CHEBI:28868"/>
        <dbReference type="ChEBI" id="CHEBI:57643"/>
        <dbReference type="ChEBI" id="CHEBI:57875"/>
        <dbReference type="EC" id="3.1.1.32"/>
    </reaction>
</comment>
<comment type="catalytic activity">
    <reaction evidence="2">
        <text>1,2,3-tri-(9Z-octadecenoyl)-glycerol + H2O = di-(9Z)-octadecenoylglycerol + (9Z)-octadecenoate + H(+)</text>
        <dbReference type="Rhea" id="RHEA:38575"/>
        <dbReference type="ChEBI" id="CHEBI:15377"/>
        <dbReference type="ChEBI" id="CHEBI:15378"/>
        <dbReference type="ChEBI" id="CHEBI:30823"/>
        <dbReference type="ChEBI" id="CHEBI:53753"/>
        <dbReference type="ChEBI" id="CHEBI:75945"/>
    </reaction>
    <physiologicalReaction direction="left-to-right" evidence="2">
        <dbReference type="Rhea" id="RHEA:38576"/>
    </physiologicalReaction>
</comment>
<comment type="catalytic activity">
    <reaction evidence="2">
        <text>1,2-di-(9Z-octadecenoyl)-sn-glycero-3-phosphocholine + H2O = (9Z-octadecenoyl)-sn-glycero-3-phosphocholine + (9Z)-octadecenoate + H(+)</text>
        <dbReference type="Rhea" id="RHEA:38699"/>
        <dbReference type="ChEBI" id="CHEBI:15377"/>
        <dbReference type="ChEBI" id="CHEBI:15378"/>
        <dbReference type="ChEBI" id="CHEBI:30823"/>
        <dbReference type="ChEBI" id="CHEBI:74669"/>
        <dbReference type="ChEBI" id="CHEBI:76083"/>
    </reaction>
    <physiologicalReaction direction="left-to-right" evidence="2">
        <dbReference type="Rhea" id="RHEA:38700"/>
    </physiologicalReaction>
</comment>
<comment type="catalytic activity">
    <reaction evidence="2">
        <text>1,2,3-tributanoylglycerol + H2O = dibutanoylglycerol + butanoate + H(+)</text>
        <dbReference type="Rhea" id="RHEA:40475"/>
        <dbReference type="ChEBI" id="CHEBI:15377"/>
        <dbReference type="ChEBI" id="CHEBI:15378"/>
        <dbReference type="ChEBI" id="CHEBI:17968"/>
        <dbReference type="ChEBI" id="CHEBI:35020"/>
        <dbReference type="ChEBI" id="CHEBI:76478"/>
    </reaction>
    <physiologicalReaction direction="left-to-right" evidence="2">
        <dbReference type="Rhea" id="RHEA:40476"/>
    </physiologicalReaction>
</comment>
<comment type="catalytic activity">
    <reaction evidence="2">
        <text>1,2-dihexadecanoyl-sn-glycero-3-phosphocholine + H2O = hexadecanoyl-sn-glycero-3-phosphocholine + hexadecanoate + H(+)</text>
        <dbReference type="Rhea" id="RHEA:41384"/>
        <dbReference type="ChEBI" id="CHEBI:7896"/>
        <dbReference type="ChEBI" id="CHEBI:15377"/>
        <dbReference type="ChEBI" id="CHEBI:15378"/>
        <dbReference type="ChEBI" id="CHEBI:64563"/>
        <dbReference type="ChEBI" id="CHEBI:72999"/>
    </reaction>
    <physiologicalReaction direction="left-to-right" evidence="2">
        <dbReference type="Rhea" id="RHEA:41385"/>
    </physiologicalReaction>
</comment>
<comment type="activity regulation">
    <text evidence="2">Ca(2+) binding promotes protein stability and formation of the active homodimer.</text>
</comment>
<comment type="subunit">
    <text evidence="2 3">Homodimer. Interacts with GPIHBP1 with 1:1 stoichiometry (By similarity). Interacts with APOC2; the interaction activates LPL activity in the presence of lipids (By similarity). Interaction with heparan sulfate proteoglycans is required to protect LPL against loss of activity. Associates with lipoprotein particles in blood plasma. Interacts with LMF1 and SEL1L; interaction with SEL1L is required to prevent aggregation of newly synthesized LPL in the endoplasmic reticulum (ER), and for normal export of LPL from the ER to the extracellular space (By similarity).</text>
</comment>
<comment type="subcellular location">
    <subcellularLocation>
        <location evidence="3">Cell membrane</location>
        <topology evidence="3">Peripheral membrane protein</topology>
        <orientation evidence="3">Extracellular side</orientation>
    </subcellularLocation>
    <subcellularLocation>
        <location evidence="3">Secreted</location>
    </subcellularLocation>
    <subcellularLocation>
        <location evidence="3">Secreted</location>
        <location evidence="3">Extracellular space</location>
        <location evidence="3">Extracellular matrix</location>
    </subcellularLocation>
    <text evidence="3">Newly synthesized LPL binds to cell surface heparan proteoglycans and is then released by heparanase. Subsequently, it becomes attached to heparan proteoglycan on endothelial cells. Locates to the plasma membrane of microvilli of hepatocytes with triglyceride-rich lipoproteins (TRL). Some of the bound LPL is then internalized and located inside non-coated endocytic vesicles.</text>
</comment>
<comment type="PTM">
    <text evidence="8">N-glycan at Asn-70 is a triantennary complex oligosaccharide containing sialic acid, galactose, mannose, and N-acetylglucosamine, the reducing GlcNAc being sulfated at C6.</text>
</comment>
<comment type="PTM">
    <text evidence="4">Tyrosine nitration after lipopolysaccharide (LPS) challenge down-regulates the lipase activity.</text>
</comment>
<comment type="similarity">
    <text evidence="11">Belongs to the AB hydrolase superfamily. Lipase family.</text>
</comment>
<dbReference type="EC" id="3.1.1.34" evidence="3"/>
<dbReference type="EC" id="3.1.1.32" evidence="2"/>
<dbReference type="EMBL" id="X14670">
    <property type="protein sequence ID" value="CAA32800.1"/>
    <property type="molecule type" value="mRNA"/>
</dbReference>
<dbReference type="EMBL" id="X60547">
    <property type="protein sequence ID" value="CAA43037.1"/>
    <property type="molecule type" value="Genomic_DNA"/>
</dbReference>
<dbReference type="PIR" id="S04331">
    <property type="entry name" value="S04331"/>
</dbReference>
<dbReference type="RefSeq" id="NP_990613.1">
    <property type="nucleotide sequence ID" value="NM_205282.2"/>
</dbReference>
<dbReference type="SMR" id="P11602"/>
<dbReference type="FunCoup" id="P11602">
    <property type="interactions" value="58"/>
</dbReference>
<dbReference type="STRING" id="9031.ENSGALP00000036979"/>
<dbReference type="ESTHER" id="chick-lipli">
    <property type="family name" value="Lipoprotein_Lipase"/>
</dbReference>
<dbReference type="GlyCosmos" id="P11602">
    <property type="glycosylation" value="3 sites, No reported glycans"/>
</dbReference>
<dbReference type="GlyGen" id="P11602">
    <property type="glycosylation" value="3 sites"/>
</dbReference>
<dbReference type="iPTMnet" id="P11602"/>
<dbReference type="PaxDb" id="9031-ENSGALP00000036979"/>
<dbReference type="ABCD" id="P11602">
    <property type="antibodies" value="1 sequenced antibody"/>
</dbReference>
<dbReference type="Ensembl" id="ENSGALT00010033474.1">
    <property type="protein sequence ID" value="ENSGALP00010019747.1"/>
    <property type="gene ID" value="ENSGALG00010013954.1"/>
</dbReference>
<dbReference type="GeneID" id="396219"/>
<dbReference type="KEGG" id="gga:396219"/>
<dbReference type="CTD" id="4023"/>
<dbReference type="VEuPathDB" id="HostDB:geneid_396219"/>
<dbReference type="eggNOG" id="ENOG502QQ7P">
    <property type="taxonomic scope" value="Eukaryota"/>
</dbReference>
<dbReference type="GeneTree" id="ENSGT00940000157178"/>
<dbReference type="HOGENOM" id="CLU_027171_1_0_1"/>
<dbReference type="InParanoid" id="P11602"/>
<dbReference type="OrthoDB" id="199913at2759"/>
<dbReference type="PhylomeDB" id="P11602"/>
<dbReference type="Reactome" id="R-GGA-8963889">
    <property type="pathway name" value="Assembly of active LPL and LIPC lipase complexes"/>
</dbReference>
<dbReference type="PRO" id="PR:P11602"/>
<dbReference type="Proteomes" id="UP000000539">
    <property type="component" value="Chromosome Z"/>
</dbReference>
<dbReference type="Bgee" id="ENSGALG00000015425">
    <property type="expression patterns" value="Expressed in heart and 12 other cell types or tissues"/>
</dbReference>
<dbReference type="GO" id="GO:1902494">
    <property type="term" value="C:catalytic complex"/>
    <property type="evidence" value="ECO:0007669"/>
    <property type="project" value="Ensembl"/>
</dbReference>
<dbReference type="GO" id="GO:0042627">
    <property type="term" value="C:chylomicron"/>
    <property type="evidence" value="ECO:0007669"/>
    <property type="project" value="UniProtKB-KW"/>
</dbReference>
<dbReference type="GO" id="GO:0005615">
    <property type="term" value="C:extracellular space"/>
    <property type="evidence" value="ECO:0000250"/>
    <property type="project" value="UniProtKB"/>
</dbReference>
<dbReference type="GO" id="GO:0005886">
    <property type="term" value="C:plasma membrane"/>
    <property type="evidence" value="ECO:0007669"/>
    <property type="project" value="UniProtKB-SubCell"/>
</dbReference>
<dbReference type="GO" id="GO:0034361">
    <property type="term" value="C:very-low-density lipoprotein particle"/>
    <property type="evidence" value="ECO:0007669"/>
    <property type="project" value="UniProtKB-KW"/>
</dbReference>
<dbReference type="GO" id="GO:0034185">
    <property type="term" value="F:apolipoprotein binding"/>
    <property type="evidence" value="ECO:0000318"/>
    <property type="project" value="GO_Central"/>
</dbReference>
<dbReference type="GO" id="GO:0005509">
    <property type="term" value="F:calcium ion binding"/>
    <property type="evidence" value="ECO:0007669"/>
    <property type="project" value="Ensembl"/>
</dbReference>
<dbReference type="GO" id="GO:0043395">
    <property type="term" value="F:heparan sulfate proteoglycan binding"/>
    <property type="evidence" value="ECO:0000250"/>
    <property type="project" value="UniProtKB"/>
</dbReference>
<dbReference type="GO" id="GO:0008201">
    <property type="term" value="F:heparin binding"/>
    <property type="evidence" value="ECO:0000250"/>
    <property type="project" value="UniProtKB"/>
</dbReference>
<dbReference type="GO" id="GO:0004465">
    <property type="term" value="F:lipoprotein lipase activity"/>
    <property type="evidence" value="ECO:0000250"/>
    <property type="project" value="UniProtKB"/>
</dbReference>
<dbReference type="GO" id="GO:0071813">
    <property type="term" value="F:lipoprotein particle binding"/>
    <property type="evidence" value="ECO:0000250"/>
    <property type="project" value="UniProtKB"/>
</dbReference>
<dbReference type="GO" id="GO:0008970">
    <property type="term" value="F:phospholipase A1 activity"/>
    <property type="evidence" value="ECO:0000250"/>
    <property type="project" value="UniProtKB"/>
</dbReference>
<dbReference type="GO" id="GO:0042803">
    <property type="term" value="F:protein homodimerization activity"/>
    <property type="evidence" value="ECO:0007669"/>
    <property type="project" value="Ensembl"/>
</dbReference>
<dbReference type="GO" id="GO:0005102">
    <property type="term" value="F:signaling receptor binding"/>
    <property type="evidence" value="ECO:0007669"/>
    <property type="project" value="Ensembl"/>
</dbReference>
<dbReference type="GO" id="GO:0004806">
    <property type="term" value="F:triacylglycerol lipase activity"/>
    <property type="evidence" value="ECO:0000250"/>
    <property type="project" value="UniProtKB"/>
</dbReference>
<dbReference type="GO" id="GO:0042632">
    <property type="term" value="P:cholesterol homeostasis"/>
    <property type="evidence" value="ECO:0000318"/>
    <property type="project" value="GO_Central"/>
</dbReference>
<dbReference type="GO" id="GO:0034371">
    <property type="term" value="P:chylomicron remodeling"/>
    <property type="evidence" value="ECO:0000250"/>
    <property type="project" value="UniProtKB"/>
</dbReference>
<dbReference type="GO" id="GO:0006633">
    <property type="term" value="P:fatty acid biosynthetic process"/>
    <property type="evidence" value="ECO:0000318"/>
    <property type="project" value="GO_Central"/>
</dbReference>
<dbReference type="GO" id="GO:0006631">
    <property type="term" value="P:fatty acid metabolic process"/>
    <property type="evidence" value="ECO:0000250"/>
    <property type="project" value="UniProtKB"/>
</dbReference>
<dbReference type="GO" id="GO:0034375">
    <property type="term" value="P:high-density lipoprotein particle remodeling"/>
    <property type="evidence" value="ECO:0000318"/>
    <property type="project" value="GO_Central"/>
</dbReference>
<dbReference type="GO" id="GO:0055096">
    <property type="term" value="P:low-density lipoprotein particle mediated signaling"/>
    <property type="evidence" value="ECO:0007669"/>
    <property type="project" value="Ensembl"/>
</dbReference>
<dbReference type="GO" id="GO:1904179">
    <property type="term" value="P:positive regulation of adipose tissue development"/>
    <property type="evidence" value="ECO:0007669"/>
    <property type="project" value="Ensembl"/>
</dbReference>
<dbReference type="GO" id="GO:0032722">
    <property type="term" value="P:positive regulation of chemokine production"/>
    <property type="evidence" value="ECO:0007669"/>
    <property type="project" value="Ensembl"/>
</dbReference>
<dbReference type="GO" id="GO:0010886">
    <property type="term" value="P:positive regulation of cholesterol storage"/>
    <property type="evidence" value="ECO:0007669"/>
    <property type="project" value="Ensembl"/>
</dbReference>
<dbReference type="GO" id="GO:0045600">
    <property type="term" value="P:positive regulation of fat cell differentiation"/>
    <property type="evidence" value="ECO:0007669"/>
    <property type="project" value="Ensembl"/>
</dbReference>
<dbReference type="GO" id="GO:0010744">
    <property type="term" value="P:positive regulation of macrophage derived foam cell differentiation"/>
    <property type="evidence" value="ECO:0007669"/>
    <property type="project" value="Ensembl"/>
</dbReference>
<dbReference type="GO" id="GO:0019433">
    <property type="term" value="P:triglyceride catabolic process"/>
    <property type="evidence" value="ECO:0000250"/>
    <property type="project" value="UniProtKB"/>
</dbReference>
<dbReference type="GO" id="GO:0070328">
    <property type="term" value="P:triglyceride homeostasis"/>
    <property type="evidence" value="ECO:0007669"/>
    <property type="project" value="Ensembl"/>
</dbReference>
<dbReference type="GO" id="GO:0034372">
    <property type="term" value="P:very-low-density lipoprotein particle remodeling"/>
    <property type="evidence" value="ECO:0000318"/>
    <property type="project" value="GO_Central"/>
</dbReference>
<dbReference type="CDD" id="cd00707">
    <property type="entry name" value="Pancreat_lipase_like"/>
    <property type="match status" value="1"/>
</dbReference>
<dbReference type="CDD" id="cd01758">
    <property type="entry name" value="PLAT_LPL"/>
    <property type="match status" value="1"/>
</dbReference>
<dbReference type="FunFam" id="2.60.60.20:FF:000006">
    <property type="entry name" value="Lipoprotein lipase"/>
    <property type="match status" value="1"/>
</dbReference>
<dbReference type="FunFam" id="3.40.50.1820:FF:000031">
    <property type="entry name" value="Lipoprotein lipase"/>
    <property type="match status" value="1"/>
</dbReference>
<dbReference type="Gene3D" id="3.40.50.1820">
    <property type="entry name" value="alpha/beta hydrolase"/>
    <property type="match status" value="1"/>
</dbReference>
<dbReference type="Gene3D" id="2.60.60.20">
    <property type="entry name" value="PLAT/LH2 domain"/>
    <property type="match status" value="1"/>
</dbReference>
<dbReference type="InterPro" id="IPR029058">
    <property type="entry name" value="AB_hydrolase_fold"/>
</dbReference>
<dbReference type="InterPro" id="IPR013818">
    <property type="entry name" value="Lipase"/>
</dbReference>
<dbReference type="InterPro" id="IPR016272">
    <property type="entry name" value="Lipase_LIPH"/>
</dbReference>
<dbReference type="InterPro" id="IPR033906">
    <property type="entry name" value="Lipase_N"/>
</dbReference>
<dbReference type="InterPro" id="IPR002330">
    <property type="entry name" value="Lipo_Lipase"/>
</dbReference>
<dbReference type="InterPro" id="IPR001024">
    <property type="entry name" value="PLAT/LH2_dom"/>
</dbReference>
<dbReference type="InterPro" id="IPR036392">
    <property type="entry name" value="PLAT/LH2_dom_sf"/>
</dbReference>
<dbReference type="InterPro" id="IPR000734">
    <property type="entry name" value="TAG_lipase"/>
</dbReference>
<dbReference type="NCBIfam" id="TIGR03230">
    <property type="entry name" value="lipo_lipase"/>
    <property type="match status" value="1"/>
</dbReference>
<dbReference type="PANTHER" id="PTHR11610">
    <property type="entry name" value="LIPASE"/>
    <property type="match status" value="1"/>
</dbReference>
<dbReference type="PANTHER" id="PTHR11610:SF3">
    <property type="entry name" value="LIPOPROTEIN LIPASE"/>
    <property type="match status" value="1"/>
</dbReference>
<dbReference type="Pfam" id="PF00151">
    <property type="entry name" value="Lipase"/>
    <property type="match status" value="1"/>
</dbReference>
<dbReference type="Pfam" id="PF01477">
    <property type="entry name" value="PLAT"/>
    <property type="match status" value="1"/>
</dbReference>
<dbReference type="PIRSF" id="PIRSF000865">
    <property type="entry name" value="Lipoprotein_lipase_LIPH"/>
    <property type="match status" value="1"/>
</dbReference>
<dbReference type="PRINTS" id="PR00822">
    <property type="entry name" value="LIPOLIPASE"/>
</dbReference>
<dbReference type="PRINTS" id="PR00821">
    <property type="entry name" value="TAGLIPASE"/>
</dbReference>
<dbReference type="SMART" id="SM00308">
    <property type="entry name" value="LH2"/>
    <property type="match status" value="1"/>
</dbReference>
<dbReference type="SUPFAM" id="SSF53474">
    <property type="entry name" value="alpha/beta-Hydrolases"/>
    <property type="match status" value="1"/>
</dbReference>
<dbReference type="SUPFAM" id="SSF49723">
    <property type="entry name" value="Lipase/lipooxygenase domain (PLAT/LH2 domain)"/>
    <property type="match status" value="1"/>
</dbReference>
<dbReference type="PROSITE" id="PS00120">
    <property type="entry name" value="LIPASE_SER"/>
    <property type="match status" value="1"/>
</dbReference>
<dbReference type="PROSITE" id="PS50095">
    <property type="entry name" value="PLAT"/>
    <property type="match status" value="1"/>
</dbReference>
<proteinExistence type="evidence at protein level"/>
<evidence type="ECO:0000250" key="1"/>
<evidence type="ECO:0000250" key="2">
    <source>
        <dbReference type="UniProtKB" id="P06858"/>
    </source>
</evidence>
<evidence type="ECO:0000250" key="3">
    <source>
        <dbReference type="UniProtKB" id="P11151"/>
    </source>
</evidence>
<evidence type="ECO:0000250" key="4">
    <source>
        <dbReference type="UniProtKB" id="Q06000"/>
    </source>
</evidence>
<evidence type="ECO:0000255" key="5">
    <source>
        <dbReference type="PROSITE-ProRule" id="PRU00152"/>
    </source>
</evidence>
<evidence type="ECO:0000255" key="6">
    <source>
        <dbReference type="PROSITE-ProRule" id="PRU10037"/>
    </source>
</evidence>
<evidence type="ECO:0000256" key="7">
    <source>
        <dbReference type="SAM" id="MobiDB-lite"/>
    </source>
</evidence>
<evidence type="ECO:0000269" key="8">
    <source>
    </source>
</evidence>
<evidence type="ECO:0000269" key="9">
    <source>
    </source>
</evidence>
<evidence type="ECO:0000269" key="10">
    <source>
    </source>
</evidence>
<evidence type="ECO:0000305" key="11"/>
<organism>
    <name type="scientific">Gallus gallus</name>
    <name type="common">Chicken</name>
    <dbReference type="NCBI Taxonomy" id="9031"/>
    <lineage>
        <taxon>Eukaryota</taxon>
        <taxon>Metazoa</taxon>
        <taxon>Chordata</taxon>
        <taxon>Craniata</taxon>
        <taxon>Vertebrata</taxon>
        <taxon>Euteleostomi</taxon>
        <taxon>Archelosauria</taxon>
        <taxon>Archosauria</taxon>
        <taxon>Dinosauria</taxon>
        <taxon>Saurischia</taxon>
        <taxon>Theropoda</taxon>
        <taxon>Coelurosauria</taxon>
        <taxon>Aves</taxon>
        <taxon>Neognathae</taxon>
        <taxon>Galloanserae</taxon>
        <taxon>Galliformes</taxon>
        <taxon>Phasianidae</taxon>
        <taxon>Phasianinae</taxon>
        <taxon>Gallus</taxon>
    </lineage>
</organism>